<reference key="1">
    <citation type="journal article" date="1995" name="Planta">
        <title>Isolation of a cDNA encoding a cytochrome b5 specifically expressed in developing tobacco seeds.</title>
        <authorList>
            <person name="Napier J.A."/>
            <person name="Smith M.A."/>
            <person name="Stobart A.K."/>
            <person name="Shewry P.R."/>
        </authorList>
    </citation>
    <scope>NUCLEOTIDE SEQUENCE [MRNA]</scope>
    <source>
        <strain>cv. Samsun</strain>
        <tissue>Seed</tissue>
    </source>
</reference>
<feature type="chain" id="PRO_0000166026" description="Cytochrome b5, seed isoform">
    <location>
        <begin position="1"/>
        <end position="135"/>
    </location>
</feature>
<feature type="transmembrane region" description="Helical" evidence="2">
    <location>
        <begin position="107"/>
        <end position="127"/>
    </location>
</feature>
<feature type="domain" description="Cytochrome b5 heme-binding" evidence="3">
    <location>
        <begin position="5"/>
        <end position="81"/>
    </location>
</feature>
<feature type="binding site" description="axial binding residue" evidence="3">
    <location>
        <position position="40"/>
    </location>
    <ligand>
        <name>heme</name>
        <dbReference type="ChEBI" id="CHEBI:30413"/>
    </ligand>
    <ligandPart>
        <name>Fe</name>
        <dbReference type="ChEBI" id="CHEBI:18248"/>
    </ligandPart>
</feature>
<feature type="binding site" description="axial binding residue" evidence="3">
    <location>
        <position position="64"/>
    </location>
    <ligand>
        <name>heme</name>
        <dbReference type="ChEBI" id="CHEBI:30413"/>
    </ligand>
    <ligandPart>
        <name>Fe</name>
        <dbReference type="ChEBI" id="CHEBI:18248"/>
    </ligandPart>
</feature>
<accession>P49099</accession>
<evidence type="ECO:0000250" key="1"/>
<evidence type="ECO:0000255" key="2"/>
<evidence type="ECO:0000255" key="3">
    <source>
        <dbReference type="PROSITE-ProRule" id="PRU00279"/>
    </source>
</evidence>
<evidence type="ECO:0000305" key="4"/>
<comment type="function">
    <text>Cytochrome b5 is a membrane bound hemoprotein which function as an electron carrier for several membrane bound oxygenases. May play a key role in the modification by desaturation of fatty acids in the endoplasmic reticulum, which in the developing seed is utilized for membrane synthesis and in the developmentally regulated production of large amounts of storage lipids.</text>
</comment>
<comment type="subcellular location">
    <subcellularLocation>
        <location evidence="1">Endoplasmic reticulum membrane</location>
        <topology evidence="1">Single-pass membrane protein</topology>
        <orientation evidence="1">Cytoplasmic side</orientation>
    </subcellularLocation>
    <subcellularLocation>
        <location evidence="1">Microsome membrane</location>
        <topology evidence="1">Single-pass membrane protein</topology>
        <orientation evidence="1">Cytoplasmic side</orientation>
    </subcellularLocation>
</comment>
<comment type="tissue specificity">
    <text>Specifically expressed in developing seeds.</text>
</comment>
<comment type="similarity">
    <text evidence="4">Belongs to the cytochrome b5 family.</text>
</comment>
<proteinExistence type="evidence at transcript level"/>
<protein>
    <recommendedName>
        <fullName>Cytochrome b5, seed isoform</fullName>
    </recommendedName>
</protein>
<name>CYB5S_TOBAC</name>
<organism>
    <name type="scientific">Nicotiana tabacum</name>
    <name type="common">Common tobacco</name>
    <dbReference type="NCBI Taxonomy" id="4097"/>
    <lineage>
        <taxon>Eukaryota</taxon>
        <taxon>Viridiplantae</taxon>
        <taxon>Streptophyta</taxon>
        <taxon>Embryophyta</taxon>
        <taxon>Tracheophyta</taxon>
        <taxon>Spermatophyta</taxon>
        <taxon>Magnoliopsida</taxon>
        <taxon>eudicotyledons</taxon>
        <taxon>Gunneridae</taxon>
        <taxon>Pentapetalae</taxon>
        <taxon>asterids</taxon>
        <taxon>lamiids</taxon>
        <taxon>Solanales</taxon>
        <taxon>Solanaceae</taxon>
        <taxon>Nicotianoideae</taxon>
        <taxon>Nicotianeae</taxon>
        <taxon>Nicotiana</taxon>
    </lineage>
</organism>
<dbReference type="EMBL" id="X80008">
    <property type="protein sequence ID" value="CAA56318.1"/>
    <property type="molecule type" value="mRNA"/>
</dbReference>
<dbReference type="PIR" id="S49200">
    <property type="entry name" value="S49200"/>
</dbReference>
<dbReference type="RefSeq" id="NP_001412862.1">
    <property type="nucleotide sequence ID" value="NM_001425933.1"/>
</dbReference>
<dbReference type="RefSeq" id="XP_016493653.1">
    <property type="nucleotide sequence ID" value="XM_016638167.1"/>
</dbReference>
<dbReference type="SMR" id="P49099"/>
<dbReference type="STRING" id="4097.P49099"/>
<dbReference type="PaxDb" id="4097-P49099"/>
<dbReference type="GeneID" id="107812972"/>
<dbReference type="KEGG" id="nta:107812972"/>
<dbReference type="OMA" id="HANDCWI"/>
<dbReference type="OrthoDB" id="260519at2759"/>
<dbReference type="PhylomeDB" id="P49099"/>
<dbReference type="Proteomes" id="UP000084051">
    <property type="component" value="Unplaced"/>
</dbReference>
<dbReference type="GO" id="GO:0005789">
    <property type="term" value="C:endoplasmic reticulum membrane"/>
    <property type="evidence" value="ECO:0007669"/>
    <property type="project" value="UniProtKB-SubCell"/>
</dbReference>
<dbReference type="GO" id="GO:0043231">
    <property type="term" value="C:intracellular membrane-bounded organelle"/>
    <property type="evidence" value="ECO:0000318"/>
    <property type="project" value="GO_Central"/>
</dbReference>
<dbReference type="GO" id="GO:0016020">
    <property type="term" value="C:membrane"/>
    <property type="evidence" value="ECO:0000318"/>
    <property type="project" value="GO_Central"/>
</dbReference>
<dbReference type="GO" id="GO:0020037">
    <property type="term" value="F:heme binding"/>
    <property type="evidence" value="ECO:0000318"/>
    <property type="project" value="GO_Central"/>
</dbReference>
<dbReference type="GO" id="GO:0046872">
    <property type="term" value="F:metal ion binding"/>
    <property type="evidence" value="ECO:0007669"/>
    <property type="project" value="UniProtKB-KW"/>
</dbReference>
<dbReference type="FunFam" id="3.10.120.10:FF:000002">
    <property type="entry name" value="Cytochrome b5 type B"/>
    <property type="match status" value="1"/>
</dbReference>
<dbReference type="Gene3D" id="3.10.120.10">
    <property type="entry name" value="Cytochrome b5-like heme/steroid binding domain"/>
    <property type="match status" value="1"/>
</dbReference>
<dbReference type="InterPro" id="IPR001199">
    <property type="entry name" value="Cyt_B5-like_heme/steroid-bd"/>
</dbReference>
<dbReference type="InterPro" id="IPR036400">
    <property type="entry name" value="Cyt_B5-like_heme/steroid_sf"/>
</dbReference>
<dbReference type="InterPro" id="IPR018506">
    <property type="entry name" value="Cyt_B5_heme-BS"/>
</dbReference>
<dbReference type="InterPro" id="IPR050668">
    <property type="entry name" value="Cytochrome_b5"/>
</dbReference>
<dbReference type="PANTHER" id="PTHR19359">
    <property type="entry name" value="CYTOCHROME B5"/>
    <property type="match status" value="1"/>
</dbReference>
<dbReference type="PANTHER" id="PTHR19359:SF129">
    <property type="entry name" value="CYTOCHROME B5 ISOFORM B"/>
    <property type="match status" value="1"/>
</dbReference>
<dbReference type="Pfam" id="PF00173">
    <property type="entry name" value="Cyt-b5"/>
    <property type="match status" value="1"/>
</dbReference>
<dbReference type="PRINTS" id="PR00363">
    <property type="entry name" value="CYTOCHROMEB5"/>
</dbReference>
<dbReference type="SMART" id="SM01117">
    <property type="entry name" value="Cyt-b5"/>
    <property type="match status" value="1"/>
</dbReference>
<dbReference type="SUPFAM" id="SSF55856">
    <property type="entry name" value="Cytochrome b5-like heme/steroid binding domain"/>
    <property type="match status" value="1"/>
</dbReference>
<dbReference type="PROSITE" id="PS00191">
    <property type="entry name" value="CYTOCHROME_B5_1"/>
    <property type="match status" value="1"/>
</dbReference>
<dbReference type="PROSITE" id="PS50255">
    <property type="entry name" value="CYTOCHROME_B5_2"/>
    <property type="match status" value="1"/>
</dbReference>
<keyword id="KW-0249">Electron transport</keyword>
<keyword id="KW-0256">Endoplasmic reticulum</keyword>
<keyword id="KW-0349">Heme</keyword>
<keyword id="KW-0408">Iron</keyword>
<keyword id="KW-0472">Membrane</keyword>
<keyword id="KW-0479">Metal-binding</keyword>
<keyword id="KW-0492">Microsome</keyword>
<keyword id="KW-1185">Reference proteome</keyword>
<keyword id="KW-0812">Transmembrane</keyword>
<keyword id="KW-1133">Transmembrane helix</keyword>
<keyword id="KW-0813">Transport</keyword>
<sequence length="135" mass="14869">MGGQSKVFTLAEVSNHNNAKDCWLIISGKVYNVTKFLEDHPGGGEVLLSATGKDATDDFEDIGHSSSARAMLDEYYVGDIDSSTIPTKVKYTPPKQPHYNQDKTTEFIVKLLQFLVPLIILGVAFGVHFYTKQSA</sequence>